<organism>
    <name type="scientific">Rattus norvegicus</name>
    <name type="common">Rat</name>
    <dbReference type="NCBI Taxonomy" id="10116"/>
    <lineage>
        <taxon>Eukaryota</taxon>
        <taxon>Metazoa</taxon>
        <taxon>Chordata</taxon>
        <taxon>Craniata</taxon>
        <taxon>Vertebrata</taxon>
        <taxon>Euteleostomi</taxon>
        <taxon>Mammalia</taxon>
        <taxon>Eutheria</taxon>
        <taxon>Euarchontoglires</taxon>
        <taxon>Glires</taxon>
        <taxon>Rodentia</taxon>
        <taxon>Myomorpha</taxon>
        <taxon>Muroidea</taxon>
        <taxon>Muridae</taxon>
        <taxon>Murinae</taxon>
        <taxon>Rattus</taxon>
    </lineage>
</organism>
<gene>
    <name type="primary">Rasgrf2</name>
    <name type="synonym">Grf2</name>
</gene>
<sequence length="1190" mass="135827">MQKSVRYNEGHALYLAFLARKEGTKRGFLSKKAAEASRWHEKWFALYQNVLFYFEGEQSGRPAGMYLLEGCSCERTPAPPRTNAGPAGARDALDKQYYFTVLFGHEGQKPLELRCEEEQAGKEWMEAIHQASYADILIEREVLMQKYIHLVQIVETEKIAANQLRHQLEDQDTEIERLKSEIVALNKTKERMRPYHTHQEEEDPDIKKIKKVQSFMRGWLCRRKWKTIVQDYICSPHAESMRKRNQIVFTMVEAESEYVHQLYILVNGFLRPLRMAASSKKPPISHDDVSSIFLNSETIMFLHEIFHQGLKARLANWPTLVLADLFDILLPMLNIYQEFVRNHQYSLQVLANCKQNRDFDKLLKQYEGNPACEGRMLETFLTYPMFQIPRYIITLHELLAHTPHEHVERKSLEFAKSKLEELSRVMHDEVSDTENIRKNLAIERMIVEGCDILLDTSQTFIRQGSLIQVPSVERGKLSKVRLGSLSLKKEGERQCFLFTKHFLICTRSSGGKLHLLKTGGVLSLIQCTLIEEPDTSDDDTKGPGHMFGHLDFKIVVEPPDAAPFTVVLLAPSRQEKAAWMSDISQCVDNIRCNGLMTIVFEENSKVTVPHMIKSDARLHKDDTDICFSKTLNSCKVPQIRYASVERLLERLTDLRFLSIDFLNTFLHTYRIFTTAAVVLGKLSDIYKRPFTSIPVRSLELFFATSQNNREHLVDGKSPRLCRKFSSPPPLAVSRTSSPVRARKLSLTSSLNSRIGALDLTTSSSSSSPTTTVHSPAASPPPHTAVPESAPADRAGDSTDMSPCRSPSTTPRHLRYRQPGGQVADSTHCAVSPASAFAIATAAAGHGSPPGFNNERTCDKEFIIRRTATNRVLNVLRHWVSKHSQDFELNNELKMNVLNLLEEVLRDPDLLPQERKATANILRALSQDDQDDIHLKLEDIIQMTDCPKAECFETLSAMELAEQITLLDHIVFRSIPYEEFLGQGWMKLDKNERTPYIMKTSQHFNEMSNLVASQIMNYADISSRANAIEKWVAVADICRCLHNYNGVLEITSALNRSAIYRLKKTWTKVSKQTKALMDKLQKTVSSEGRFKNLRETLKNCNPPAVPYLGMYLTDLAFIEEGTPNFTEEGLVNFSKMRMISHIIREIRQFQQTAYRIDQQPKVIQYLLDKALVIDEDTLYELSLKIEPRLPA</sequence>
<feature type="chain" id="PRO_0000312865" description="Ras-specific guanine nucleotide-releasing factor 2">
    <location>
        <begin position="1"/>
        <end position="1190"/>
    </location>
</feature>
<feature type="domain" description="PH 1" evidence="8">
    <location>
        <begin position="22"/>
        <end position="133"/>
    </location>
</feature>
<feature type="domain" description="IQ" evidence="6">
    <location>
        <begin position="205"/>
        <end position="234"/>
    </location>
</feature>
<feature type="domain" description="DH" evidence="5">
    <location>
        <begin position="243"/>
        <end position="429"/>
    </location>
</feature>
<feature type="domain" description="PH 2" evidence="8">
    <location>
        <begin position="470"/>
        <end position="588"/>
    </location>
</feature>
<feature type="domain" description="N-terminal Ras-GEF" evidence="7">
    <location>
        <begin position="635"/>
        <end position="755"/>
    </location>
</feature>
<feature type="domain" description="Ras-GEF" evidence="9">
    <location>
        <begin position="955"/>
        <end position="1187"/>
    </location>
</feature>
<feature type="region of interest" description="Disordered" evidence="10">
    <location>
        <begin position="713"/>
        <end position="744"/>
    </location>
</feature>
<feature type="region of interest" description="Regulates proteasomal degradation" evidence="1">
    <location>
        <begin position="743"/>
        <end position="751"/>
    </location>
</feature>
<feature type="region of interest" description="Disordered" evidence="10">
    <location>
        <begin position="757"/>
        <end position="826"/>
    </location>
</feature>
<feature type="region of interest" description="Responsible of the affinity for farnesylated versus geranylgeranylated Ras" evidence="1">
    <location>
        <begin position="1052"/>
        <end position="1081"/>
    </location>
</feature>
<feature type="coiled-coil region" evidence="4">
    <location>
        <begin position="155"/>
        <end position="193"/>
    </location>
</feature>
<feature type="compositionally biased region" description="Low complexity" evidence="10">
    <location>
        <begin position="760"/>
        <end position="776"/>
    </location>
</feature>
<feature type="compositionally biased region" description="Polar residues" evidence="10">
    <location>
        <begin position="798"/>
        <end position="810"/>
    </location>
</feature>
<feature type="modified residue" description="Phosphoserine" evidence="3">
    <location>
        <position position="725"/>
    </location>
</feature>
<feature type="modified residue" description="Phosphoserine" evidence="3">
    <location>
        <position position="726"/>
    </location>
</feature>
<feature type="modified residue" description="Phosphoserine; by CDK5" evidence="2">
    <location>
        <position position="736"/>
    </location>
</feature>
<feature type="modified residue" description="Phosphoserine" evidence="2">
    <location>
        <position position="745"/>
    </location>
</feature>
<feature type="modified residue" description="Phosphoserine" evidence="3">
    <location>
        <position position="749"/>
    </location>
</feature>
<feature type="modified residue" description="Phosphoserine" evidence="3">
    <location>
        <position position="801"/>
    </location>
</feature>
<feature type="modified residue" description="Phosphoserine" evidence="3">
    <location>
        <position position="805"/>
    </location>
</feature>
<feature type="modified residue" description="Phosphoserine" evidence="3">
    <location>
        <position position="925"/>
    </location>
</feature>
<evidence type="ECO:0000250" key="1"/>
<evidence type="ECO:0000250" key="2">
    <source>
        <dbReference type="UniProtKB" id="O14827"/>
    </source>
</evidence>
<evidence type="ECO:0000250" key="3">
    <source>
        <dbReference type="UniProtKB" id="P70392"/>
    </source>
</evidence>
<evidence type="ECO:0000255" key="4"/>
<evidence type="ECO:0000255" key="5">
    <source>
        <dbReference type="PROSITE-ProRule" id="PRU00062"/>
    </source>
</evidence>
<evidence type="ECO:0000255" key="6">
    <source>
        <dbReference type="PROSITE-ProRule" id="PRU00116"/>
    </source>
</evidence>
<evidence type="ECO:0000255" key="7">
    <source>
        <dbReference type="PROSITE-ProRule" id="PRU00135"/>
    </source>
</evidence>
<evidence type="ECO:0000255" key="8">
    <source>
        <dbReference type="PROSITE-ProRule" id="PRU00145"/>
    </source>
</evidence>
<evidence type="ECO:0000255" key="9">
    <source>
        <dbReference type="PROSITE-ProRule" id="PRU00168"/>
    </source>
</evidence>
<evidence type="ECO:0000256" key="10">
    <source>
        <dbReference type="SAM" id="MobiDB-lite"/>
    </source>
</evidence>
<evidence type="ECO:0000269" key="11">
    <source>
    </source>
</evidence>
<evidence type="ECO:0000269" key="12">
    <source>
    </source>
</evidence>
<accession>Q99JE4</accession>
<reference key="1">
    <citation type="journal article" date="2001" name="Mamm. Genome">
        <title>Analysis of candidate genes included in the mammary cancer susceptibility 1 (Mcs1) region.</title>
        <authorList>
            <person name="Laes J.-F."/>
            <person name="Quan X."/>
            <person name="Ravoet M."/>
            <person name="van Vooren P."/>
            <person name="van Reeth T."/>
            <person name="Szpirer J."/>
            <person name="Szpirer C."/>
        </authorList>
    </citation>
    <scope>NUCLEOTIDE SEQUENCE [MRNA]</scope>
    <source>
        <strain>Sprague-Dawley</strain>
        <tissue>Brain</tissue>
    </source>
</reference>
<reference key="2">
    <citation type="journal article" date="1997" name="Mol. Cell. Biol.">
        <title>Cloning and characterization of Ras-GRF2, a novel guanine nucleotide exchange factor for Ras.</title>
        <authorList>
            <person name="Fam N.P."/>
            <person name="Fan W.-T."/>
            <person name="Wang Z."/>
            <person name="Zhang L.-J."/>
            <person name="Chen H."/>
            <person name="Moran M.F."/>
        </authorList>
    </citation>
    <scope>TISSUE SPECIFICITY</scope>
</reference>
<reference key="3">
    <citation type="journal article" date="1999" name="Mol. Cell. Biol.">
        <title>Ras-specific exchange factor GRF: oligomerization through its Dbl homology domain and calcium-dependent activation of Raf.</title>
        <authorList>
            <person name="Anborgh P.H."/>
            <person name="Qian X."/>
            <person name="Papageorge A.G."/>
            <person name="Vass W.C."/>
            <person name="DeClue J.E."/>
            <person name="Lowy D.R."/>
        </authorList>
    </citation>
    <scope>OLIGOMERIZATION</scope>
    <scope>INTERACTION WITH RASGRF1</scope>
</reference>
<reference key="4">
    <citation type="journal article" date="2004" name="J. Neurosci.">
        <title>p35/cyclin-dependent kinase 5 phosphorylation of ras guanine nucleotide releasing factor 2 (RasGRF2) mediates Rac-dependent extracellular signal-regulated kinase 1/2 activity, altering RasGRF2 and microtubule-associated protein 1b distribution in neurons.</title>
        <authorList>
            <person name="Kesavapany S."/>
            <person name="Amin N."/>
            <person name="Zheng Y.-L."/>
            <person name="Nijhara R."/>
            <person name="Jaffe H."/>
            <person name="Sihag R."/>
            <person name="Gutkind J.S."/>
            <person name="Takahashi S."/>
            <person name="Kulkarni A."/>
            <person name="Grant P."/>
            <person name="Pant H.C."/>
        </authorList>
    </citation>
    <scope>FUNCTION</scope>
    <scope>SUBCELLULAR LOCATION</scope>
    <scope>INTERACTION WITH CDK5R1</scope>
    <scope>PHOSPHORYLATION BY CDK5</scope>
</reference>
<keyword id="KW-0106">Calcium</keyword>
<keyword id="KW-0112">Calmodulin-binding</keyword>
<keyword id="KW-1003">Cell membrane</keyword>
<keyword id="KW-0175">Coiled coil</keyword>
<keyword id="KW-0963">Cytoplasm</keyword>
<keyword id="KW-0256">Endoplasmic reticulum</keyword>
<keyword id="KW-0344">Guanine-nucleotide releasing factor</keyword>
<keyword id="KW-0472">Membrane</keyword>
<keyword id="KW-0597">Phosphoprotein</keyword>
<keyword id="KW-1185">Reference proteome</keyword>
<keyword id="KW-0677">Repeat</keyword>
<keyword id="KW-0832">Ubl conjugation</keyword>
<name>RGRF2_RAT</name>
<dbReference type="EMBL" id="AJ276774">
    <property type="protein sequence ID" value="CAC37407.1"/>
    <property type="molecule type" value="mRNA"/>
</dbReference>
<dbReference type="RefSeq" id="NP_446173.1">
    <property type="nucleotide sequence ID" value="NM_053721.1"/>
</dbReference>
<dbReference type="SMR" id="Q99JE4"/>
<dbReference type="BioGRID" id="250359">
    <property type="interactions" value="1"/>
</dbReference>
<dbReference type="FunCoup" id="Q99JE4">
    <property type="interactions" value="975"/>
</dbReference>
<dbReference type="STRING" id="10116.ENSRNOP00000069761"/>
<dbReference type="iPTMnet" id="Q99JE4"/>
<dbReference type="PhosphoSitePlus" id="Q99JE4"/>
<dbReference type="PaxDb" id="10116-ENSRNOP00000019087"/>
<dbReference type="GeneID" id="114513"/>
<dbReference type="KEGG" id="rno:114513"/>
<dbReference type="UCSC" id="RGD:69413">
    <property type="organism name" value="rat"/>
</dbReference>
<dbReference type="AGR" id="RGD:69413"/>
<dbReference type="CTD" id="5924"/>
<dbReference type="RGD" id="69413">
    <property type="gene designation" value="Rasgrf2"/>
</dbReference>
<dbReference type="eggNOG" id="KOG3417">
    <property type="taxonomic scope" value="Eukaryota"/>
</dbReference>
<dbReference type="InParanoid" id="Q99JE4"/>
<dbReference type="PhylomeDB" id="Q99JE4"/>
<dbReference type="Reactome" id="R-RNO-193648">
    <property type="pathway name" value="NRAGE signals death through JNK"/>
</dbReference>
<dbReference type="Reactome" id="R-RNO-416482">
    <property type="pathway name" value="G alpha (12/13) signalling events"/>
</dbReference>
<dbReference type="Reactome" id="R-RNO-5673001">
    <property type="pathway name" value="RAF/MAP kinase cascade"/>
</dbReference>
<dbReference type="Reactome" id="R-RNO-8980692">
    <property type="pathway name" value="RHOA GTPase cycle"/>
</dbReference>
<dbReference type="Reactome" id="R-RNO-9013148">
    <property type="pathway name" value="CDC42 GTPase cycle"/>
</dbReference>
<dbReference type="Reactome" id="R-RNO-9013149">
    <property type="pathway name" value="RAC1 GTPase cycle"/>
</dbReference>
<dbReference type="PRO" id="PR:Q99JE4"/>
<dbReference type="Proteomes" id="UP000002494">
    <property type="component" value="Unplaced"/>
</dbReference>
<dbReference type="GO" id="GO:0005789">
    <property type="term" value="C:endoplasmic reticulum membrane"/>
    <property type="evidence" value="ECO:0007669"/>
    <property type="project" value="UniProtKB-SubCell"/>
</dbReference>
<dbReference type="GO" id="GO:0098978">
    <property type="term" value="C:glutamatergic synapse"/>
    <property type="evidence" value="ECO:0000314"/>
    <property type="project" value="SynGO"/>
</dbReference>
<dbReference type="GO" id="GO:0005886">
    <property type="term" value="C:plasma membrane"/>
    <property type="evidence" value="ECO:0000318"/>
    <property type="project" value="GO_Central"/>
</dbReference>
<dbReference type="GO" id="GO:0098794">
    <property type="term" value="C:postsynapse"/>
    <property type="evidence" value="ECO:0000314"/>
    <property type="project" value="SynGO"/>
</dbReference>
<dbReference type="GO" id="GO:0005516">
    <property type="term" value="F:calmodulin binding"/>
    <property type="evidence" value="ECO:0007669"/>
    <property type="project" value="UniProtKB-KW"/>
</dbReference>
<dbReference type="GO" id="GO:0005085">
    <property type="term" value="F:guanyl-nucleotide exchange factor activity"/>
    <property type="evidence" value="ECO:0000266"/>
    <property type="project" value="RGD"/>
</dbReference>
<dbReference type="GO" id="GO:0060291">
    <property type="term" value="P:long-term synaptic potentiation"/>
    <property type="evidence" value="ECO:0000266"/>
    <property type="project" value="RGD"/>
</dbReference>
<dbReference type="GO" id="GO:0099170">
    <property type="term" value="P:postsynaptic modulation of chemical synaptic transmission"/>
    <property type="evidence" value="ECO:0000266"/>
    <property type="project" value="RGD"/>
</dbReference>
<dbReference type="GO" id="GO:0007265">
    <property type="term" value="P:Ras protein signal transduction"/>
    <property type="evidence" value="ECO:0000318"/>
    <property type="project" value="GO_Central"/>
</dbReference>
<dbReference type="GO" id="GO:0034976">
    <property type="term" value="P:response to endoplasmic reticulum stress"/>
    <property type="evidence" value="ECO:0000266"/>
    <property type="project" value="RGD"/>
</dbReference>
<dbReference type="CDD" id="cd13261">
    <property type="entry name" value="PH_RasGRF1_2"/>
    <property type="match status" value="1"/>
</dbReference>
<dbReference type="CDD" id="cd00155">
    <property type="entry name" value="RasGEF"/>
    <property type="match status" value="1"/>
</dbReference>
<dbReference type="CDD" id="cd00160">
    <property type="entry name" value="RhoGEF"/>
    <property type="match status" value="1"/>
</dbReference>
<dbReference type="FunFam" id="1.20.870.10:FF:000004">
    <property type="entry name" value="Ras-specific guanine nucleotide-releasing factor 1 isoform 2"/>
    <property type="match status" value="1"/>
</dbReference>
<dbReference type="FunFam" id="1.20.900.10:FF:000005">
    <property type="entry name" value="Ras-specific guanine nucleotide-releasing factor 1 isoform 2"/>
    <property type="match status" value="1"/>
</dbReference>
<dbReference type="FunFam" id="1.20.870.10:FF:000006">
    <property type="entry name" value="ras-specific guanine nucleotide-releasing factor 1 isoform X1"/>
    <property type="match status" value="1"/>
</dbReference>
<dbReference type="FunFam" id="2.30.29.30:FF:000117">
    <property type="entry name" value="ras-specific guanine nucleotide-releasing factor 1 isoform X2"/>
    <property type="match status" value="1"/>
</dbReference>
<dbReference type="FunFam" id="2.30.29.30:FF:000176">
    <property type="entry name" value="ras-specific guanine nucleotide-releasing factor 1 isoform X2"/>
    <property type="match status" value="1"/>
</dbReference>
<dbReference type="FunFam" id="1.10.840.10:FF:000004">
    <property type="entry name" value="ras-specific guanine nucleotide-releasing factor 2 isoform X1"/>
    <property type="match status" value="1"/>
</dbReference>
<dbReference type="Gene3D" id="1.20.900.10">
    <property type="entry name" value="Dbl homology (DH) domain"/>
    <property type="match status" value="1"/>
</dbReference>
<dbReference type="Gene3D" id="2.30.29.30">
    <property type="entry name" value="Pleckstrin-homology domain (PH domain)/Phosphotyrosine-binding domain (PTB)"/>
    <property type="match status" value="2"/>
</dbReference>
<dbReference type="Gene3D" id="1.10.840.10">
    <property type="entry name" value="Ras guanine-nucleotide exchange factors catalytic domain"/>
    <property type="match status" value="1"/>
</dbReference>
<dbReference type="Gene3D" id="1.20.870.10">
    <property type="entry name" value="Son of sevenless (SoS) protein Chain: S domain 1"/>
    <property type="match status" value="2"/>
</dbReference>
<dbReference type="InterPro" id="IPR035899">
    <property type="entry name" value="DBL_dom_sf"/>
</dbReference>
<dbReference type="InterPro" id="IPR000219">
    <property type="entry name" value="DH_dom"/>
</dbReference>
<dbReference type="InterPro" id="IPR011993">
    <property type="entry name" value="PH-like_dom_sf"/>
</dbReference>
<dbReference type="InterPro" id="IPR001849">
    <property type="entry name" value="PH_domain"/>
</dbReference>
<dbReference type="InterPro" id="IPR008937">
    <property type="entry name" value="Ras-like_GEF"/>
</dbReference>
<dbReference type="InterPro" id="IPR000651">
    <property type="entry name" value="Ras-like_Gua-exchang_fac_N"/>
</dbReference>
<dbReference type="InterPro" id="IPR019804">
    <property type="entry name" value="Ras_G-nucl-exch_fac_CS"/>
</dbReference>
<dbReference type="InterPro" id="IPR023578">
    <property type="entry name" value="Ras_GEF_dom_sf"/>
</dbReference>
<dbReference type="InterPro" id="IPR001895">
    <property type="entry name" value="RASGEF_cat_dom"/>
</dbReference>
<dbReference type="InterPro" id="IPR036964">
    <property type="entry name" value="RASGEF_cat_dom_sf"/>
</dbReference>
<dbReference type="PANTHER" id="PTHR23113">
    <property type="entry name" value="GUANINE NUCLEOTIDE EXCHANGE FACTOR"/>
    <property type="match status" value="1"/>
</dbReference>
<dbReference type="PANTHER" id="PTHR23113:SF187">
    <property type="entry name" value="RAS-SPECIFIC GUANINE NUCLEOTIDE-RELEASING FACTOR 2"/>
    <property type="match status" value="1"/>
</dbReference>
<dbReference type="Pfam" id="PF00169">
    <property type="entry name" value="PH"/>
    <property type="match status" value="1"/>
</dbReference>
<dbReference type="Pfam" id="PF00617">
    <property type="entry name" value="RasGEF"/>
    <property type="match status" value="1"/>
</dbReference>
<dbReference type="Pfam" id="PF00618">
    <property type="entry name" value="RasGEF_N"/>
    <property type="match status" value="1"/>
</dbReference>
<dbReference type="Pfam" id="PF00621">
    <property type="entry name" value="RhoGEF"/>
    <property type="match status" value="1"/>
</dbReference>
<dbReference type="SMART" id="SM00233">
    <property type="entry name" value="PH"/>
    <property type="match status" value="2"/>
</dbReference>
<dbReference type="SMART" id="SM00147">
    <property type="entry name" value="RasGEF"/>
    <property type="match status" value="1"/>
</dbReference>
<dbReference type="SMART" id="SM00229">
    <property type="entry name" value="RasGEFN"/>
    <property type="match status" value="2"/>
</dbReference>
<dbReference type="SMART" id="SM00325">
    <property type="entry name" value="RhoGEF"/>
    <property type="match status" value="1"/>
</dbReference>
<dbReference type="SUPFAM" id="SSF48065">
    <property type="entry name" value="DBL homology domain (DH-domain)"/>
    <property type="match status" value="1"/>
</dbReference>
<dbReference type="SUPFAM" id="SSF50729">
    <property type="entry name" value="PH domain-like"/>
    <property type="match status" value="2"/>
</dbReference>
<dbReference type="SUPFAM" id="SSF48366">
    <property type="entry name" value="Ras GEF"/>
    <property type="match status" value="1"/>
</dbReference>
<dbReference type="PROSITE" id="PS50010">
    <property type="entry name" value="DH_2"/>
    <property type="match status" value="1"/>
</dbReference>
<dbReference type="PROSITE" id="PS50096">
    <property type="entry name" value="IQ"/>
    <property type="match status" value="1"/>
</dbReference>
<dbReference type="PROSITE" id="PS50003">
    <property type="entry name" value="PH_DOMAIN"/>
    <property type="match status" value="2"/>
</dbReference>
<dbReference type="PROSITE" id="PS00720">
    <property type="entry name" value="RASGEF"/>
    <property type="match status" value="1"/>
</dbReference>
<dbReference type="PROSITE" id="PS50009">
    <property type="entry name" value="RASGEF_CAT"/>
    <property type="match status" value="1"/>
</dbReference>
<dbReference type="PROSITE" id="PS50212">
    <property type="entry name" value="RASGEF_NTER"/>
    <property type="match status" value="1"/>
</dbReference>
<protein>
    <recommendedName>
        <fullName>Ras-specific guanine nucleotide-releasing factor 2</fullName>
        <shortName>Ras-GRF2</shortName>
    </recommendedName>
    <alternativeName>
        <fullName>Ras guanine nucleotide exchange factor 2</fullName>
    </alternativeName>
</protein>
<proteinExistence type="evidence at protein level"/>
<comment type="function">
    <text evidence="11">Functions as a calcium-regulated nucleotide exchange factor activating both Ras and RAC1 through the exchange of bound GDP for GTP. Preferentially activates HRAS in vivo compared to RRAS based on their different types of prenylation. Functions in synaptic plasticity by contributing to the induction of long term potentiation.</text>
</comment>
<comment type="subunit">
    <text evidence="1">Homooligomer and heterooligomer with RASGRF1. Interacts with Ras and RAC1 (By similarity). Interacts in a calcium-dependent manner with calmodulin (By similarity). Interacts with CDK5R1 and probably EPB49. Interacts with the AMPA receptor through GRIA1 (By similarity). Interacts with microtubules (By similarity).</text>
</comment>
<comment type="subcellular location">
    <subcellularLocation>
        <location evidence="11">Cytoplasm</location>
    </subcellularLocation>
    <subcellularLocation>
        <location evidence="11">Cell membrane</location>
        <topology evidence="11">Peripheral membrane protein</topology>
    </subcellularLocation>
    <subcellularLocation>
        <location evidence="11">Endoplasmic reticulum membrane</location>
        <topology evidence="11">Peripheral membrane protein</topology>
    </subcellularLocation>
    <text evidence="1">Translocates to membranes when activated (By similarity). Found both at cell periphery and along the axon of neurons.</text>
</comment>
<comment type="tissue specificity">
    <text evidence="12">Widely expressed. Detected in brain, lung, spleen, pancreas, kidney, liver, heart, mammary gland and skeletal muscle.</text>
</comment>
<comment type="domain">
    <text evidence="1">The Ras-GEF domain and the N-terminal Ras-GEF domain form a Ras-binding site and mediate Ras activation.</text>
</comment>
<comment type="domain">
    <text evidence="1">The IQ domain mediates the calcium-dependent interaction with calmodulin but is dispensable for the Ras-GEF activity.</text>
</comment>
<comment type="domain">
    <text evidence="1">The DH (DBL-homology) domain mediates interaction with RASGRF1 and EPB49 and is required for RAC1 activation.</text>
</comment>
<comment type="PTM">
    <text evidence="11">Phosphorylated by CDK5; down-regulates RASGRF2-mediated RAC1 activation.</text>
</comment>
<comment type="PTM">
    <text evidence="1">Ubiquitinated upon interaction with Ras. Ubiquitination leads to degradation through the 26S proteasome (By similarity).</text>
</comment>